<proteinExistence type="inferred from homology"/>
<gene>
    <name evidence="1" type="primary">dxs</name>
    <name type="ordered locus">RPC_1149</name>
</gene>
<organism>
    <name type="scientific">Rhodopseudomonas palustris (strain BisB18)</name>
    <dbReference type="NCBI Taxonomy" id="316056"/>
    <lineage>
        <taxon>Bacteria</taxon>
        <taxon>Pseudomonadati</taxon>
        <taxon>Pseudomonadota</taxon>
        <taxon>Alphaproteobacteria</taxon>
        <taxon>Hyphomicrobiales</taxon>
        <taxon>Nitrobacteraceae</taxon>
        <taxon>Rhodopseudomonas</taxon>
    </lineage>
</organism>
<feature type="chain" id="PRO_0000256472" description="1-deoxy-D-xylulose-5-phosphate synthase">
    <location>
        <begin position="1"/>
        <end position="641"/>
    </location>
</feature>
<feature type="binding site" evidence="1">
    <location>
        <position position="79"/>
    </location>
    <ligand>
        <name>thiamine diphosphate</name>
        <dbReference type="ChEBI" id="CHEBI:58937"/>
    </ligand>
</feature>
<feature type="binding site" evidence="1">
    <location>
        <begin position="120"/>
        <end position="122"/>
    </location>
    <ligand>
        <name>thiamine diphosphate</name>
        <dbReference type="ChEBI" id="CHEBI:58937"/>
    </ligand>
</feature>
<feature type="binding site" evidence="1">
    <location>
        <position position="151"/>
    </location>
    <ligand>
        <name>Mg(2+)</name>
        <dbReference type="ChEBI" id="CHEBI:18420"/>
    </ligand>
</feature>
<feature type="binding site" evidence="1">
    <location>
        <begin position="152"/>
        <end position="153"/>
    </location>
    <ligand>
        <name>thiamine diphosphate</name>
        <dbReference type="ChEBI" id="CHEBI:58937"/>
    </ligand>
</feature>
<feature type="binding site" evidence="1">
    <location>
        <position position="180"/>
    </location>
    <ligand>
        <name>Mg(2+)</name>
        <dbReference type="ChEBI" id="CHEBI:18420"/>
    </ligand>
</feature>
<feature type="binding site" evidence="1">
    <location>
        <position position="180"/>
    </location>
    <ligand>
        <name>thiamine diphosphate</name>
        <dbReference type="ChEBI" id="CHEBI:58937"/>
    </ligand>
</feature>
<feature type="binding site" evidence="1">
    <location>
        <position position="290"/>
    </location>
    <ligand>
        <name>thiamine diphosphate</name>
        <dbReference type="ChEBI" id="CHEBI:58937"/>
    </ligand>
</feature>
<feature type="binding site" evidence="1">
    <location>
        <position position="372"/>
    </location>
    <ligand>
        <name>thiamine diphosphate</name>
        <dbReference type="ChEBI" id="CHEBI:58937"/>
    </ligand>
</feature>
<sequence>MSEFSKTPLLDTIRTPADLRKLRIDQVRQVADELRQETIEAVSVTGGHFGAGLGVVELTTAIHYVFDTPRDRLIWDVGHQAYPHKILTGRRDRIRTLRTGGGLSGFTKRTESDYDPFGAAHSSTSISAGLGMAVARDLAGGKNNVIAVIGDGSISAGMAYEAMNNAGAMNSRLIVILNDNNMSIAPPVGAMSAYLSRLYSGKTYRTLREAGKQIGKHLPKLIADRAARAEEYSRGFMMGGGTLFEELGFYYVGPVDGHNLDHLLPILQNVRDADTGPFLIHVVTQKGKGYGPAEAASDKYHAVVKFDIATGAQAKAKSNAPSYQNVFGQSLVKEAQKDDKIVGITAAMPSGTGIDIFEKAFPTRTFDVGIAEQHAVTFAAGLAAEGYKPFCAIYSTFLQRGYDQVVHDVAIQSLPVRFAIDRAGLVGADGATHAGSFDNAFLGCLPNMVIMAASDEAELVHMVATQVAINDRPSAVRYPRGEGRGVEMPEVGIALEIGKGRIVREGNKIALLSFGTRLAECEKAADELATLGLSTTIADARFMKPLDVELVLKLARDHEILLTIEEGSIGGFGSHVMQTLAEHGMLDGEVRMRSLVLPDEFMDHDTPTAMYARAGLDAKGIVKKVFEALGKDAKTDTVKLA</sequence>
<dbReference type="EC" id="2.2.1.7" evidence="1"/>
<dbReference type="EMBL" id="CP000301">
    <property type="protein sequence ID" value="ABD86712.1"/>
    <property type="molecule type" value="Genomic_DNA"/>
</dbReference>
<dbReference type="SMR" id="Q21A74"/>
<dbReference type="STRING" id="316056.RPC_1149"/>
<dbReference type="KEGG" id="rpc:RPC_1149"/>
<dbReference type="eggNOG" id="COG1154">
    <property type="taxonomic scope" value="Bacteria"/>
</dbReference>
<dbReference type="HOGENOM" id="CLU_009227_1_4_5"/>
<dbReference type="OrthoDB" id="9803371at2"/>
<dbReference type="UniPathway" id="UPA00064">
    <property type="reaction ID" value="UER00091"/>
</dbReference>
<dbReference type="GO" id="GO:0008661">
    <property type="term" value="F:1-deoxy-D-xylulose-5-phosphate synthase activity"/>
    <property type="evidence" value="ECO:0007669"/>
    <property type="project" value="UniProtKB-UniRule"/>
</dbReference>
<dbReference type="GO" id="GO:0000287">
    <property type="term" value="F:magnesium ion binding"/>
    <property type="evidence" value="ECO:0007669"/>
    <property type="project" value="UniProtKB-UniRule"/>
</dbReference>
<dbReference type="GO" id="GO:0030976">
    <property type="term" value="F:thiamine pyrophosphate binding"/>
    <property type="evidence" value="ECO:0007669"/>
    <property type="project" value="UniProtKB-UniRule"/>
</dbReference>
<dbReference type="GO" id="GO:0052865">
    <property type="term" value="P:1-deoxy-D-xylulose 5-phosphate biosynthetic process"/>
    <property type="evidence" value="ECO:0007669"/>
    <property type="project" value="UniProtKB-UniPathway"/>
</dbReference>
<dbReference type="GO" id="GO:0019682">
    <property type="term" value="P:glyceraldehyde-3-phosphate metabolic process"/>
    <property type="evidence" value="ECO:0007669"/>
    <property type="project" value="UniProtKB-ARBA"/>
</dbReference>
<dbReference type="GO" id="GO:0016114">
    <property type="term" value="P:terpenoid biosynthetic process"/>
    <property type="evidence" value="ECO:0007669"/>
    <property type="project" value="UniProtKB-UniRule"/>
</dbReference>
<dbReference type="GO" id="GO:0009228">
    <property type="term" value="P:thiamine biosynthetic process"/>
    <property type="evidence" value="ECO:0007669"/>
    <property type="project" value="UniProtKB-UniRule"/>
</dbReference>
<dbReference type="CDD" id="cd02007">
    <property type="entry name" value="TPP_DXS"/>
    <property type="match status" value="1"/>
</dbReference>
<dbReference type="CDD" id="cd07033">
    <property type="entry name" value="TPP_PYR_DXS_TK_like"/>
    <property type="match status" value="1"/>
</dbReference>
<dbReference type="FunFam" id="3.40.50.920:FF:000002">
    <property type="entry name" value="1-deoxy-D-xylulose-5-phosphate synthase"/>
    <property type="match status" value="1"/>
</dbReference>
<dbReference type="FunFam" id="3.40.50.970:FF:000005">
    <property type="entry name" value="1-deoxy-D-xylulose-5-phosphate synthase"/>
    <property type="match status" value="1"/>
</dbReference>
<dbReference type="Gene3D" id="3.40.50.920">
    <property type="match status" value="1"/>
</dbReference>
<dbReference type="Gene3D" id="3.40.50.970">
    <property type="match status" value="2"/>
</dbReference>
<dbReference type="HAMAP" id="MF_00315">
    <property type="entry name" value="DXP_synth"/>
    <property type="match status" value="1"/>
</dbReference>
<dbReference type="InterPro" id="IPR005477">
    <property type="entry name" value="Dxylulose-5-P_synthase"/>
</dbReference>
<dbReference type="InterPro" id="IPR029061">
    <property type="entry name" value="THDP-binding"/>
</dbReference>
<dbReference type="InterPro" id="IPR009014">
    <property type="entry name" value="Transketo_C/PFOR_II"/>
</dbReference>
<dbReference type="InterPro" id="IPR005475">
    <property type="entry name" value="Transketolase-like_Pyr-bd"/>
</dbReference>
<dbReference type="InterPro" id="IPR020826">
    <property type="entry name" value="Transketolase_BS"/>
</dbReference>
<dbReference type="InterPro" id="IPR033248">
    <property type="entry name" value="Transketolase_C"/>
</dbReference>
<dbReference type="InterPro" id="IPR049557">
    <property type="entry name" value="Transketolase_CS"/>
</dbReference>
<dbReference type="NCBIfam" id="TIGR00204">
    <property type="entry name" value="dxs"/>
    <property type="match status" value="1"/>
</dbReference>
<dbReference type="NCBIfam" id="NF003933">
    <property type="entry name" value="PRK05444.2-2"/>
    <property type="match status" value="1"/>
</dbReference>
<dbReference type="PANTHER" id="PTHR43322">
    <property type="entry name" value="1-D-DEOXYXYLULOSE 5-PHOSPHATE SYNTHASE-RELATED"/>
    <property type="match status" value="1"/>
</dbReference>
<dbReference type="PANTHER" id="PTHR43322:SF5">
    <property type="entry name" value="1-DEOXY-D-XYLULOSE-5-PHOSPHATE SYNTHASE, CHLOROPLASTIC"/>
    <property type="match status" value="1"/>
</dbReference>
<dbReference type="Pfam" id="PF13292">
    <property type="entry name" value="DXP_synthase_N"/>
    <property type="match status" value="1"/>
</dbReference>
<dbReference type="Pfam" id="PF02779">
    <property type="entry name" value="Transket_pyr"/>
    <property type="match status" value="1"/>
</dbReference>
<dbReference type="Pfam" id="PF02780">
    <property type="entry name" value="Transketolase_C"/>
    <property type="match status" value="1"/>
</dbReference>
<dbReference type="SMART" id="SM00861">
    <property type="entry name" value="Transket_pyr"/>
    <property type="match status" value="1"/>
</dbReference>
<dbReference type="SUPFAM" id="SSF52518">
    <property type="entry name" value="Thiamin diphosphate-binding fold (THDP-binding)"/>
    <property type="match status" value="2"/>
</dbReference>
<dbReference type="SUPFAM" id="SSF52922">
    <property type="entry name" value="TK C-terminal domain-like"/>
    <property type="match status" value="1"/>
</dbReference>
<dbReference type="PROSITE" id="PS00801">
    <property type="entry name" value="TRANSKETOLASE_1"/>
    <property type="match status" value="1"/>
</dbReference>
<dbReference type="PROSITE" id="PS00802">
    <property type="entry name" value="TRANSKETOLASE_2"/>
    <property type="match status" value="1"/>
</dbReference>
<comment type="function">
    <text evidence="1">Catalyzes the acyloin condensation reaction between C atoms 2 and 3 of pyruvate and glyceraldehyde 3-phosphate to yield 1-deoxy-D-xylulose-5-phosphate (DXP).</text>
</comment>
<comment type="catalytic activity">
    <reaction evidence="1">
        <text>D-glyceraldehyde 3-phosphate + pyruvate + H(+) = 1-deoxy-D-xylulose 5-phosphate + CO2</text>
        <dbReference type="Rhea" id="RHEA:12605"/>
        <dbReference type="ChEBI" id="CHEBI:15361"/>
        <dbReference type="ChEBI" id="CHEBI:15378"/>
        <dbReference type="ChEBI" id="CHEBI:16526"/>
        <dbReference type="ChEBI" id="CHEBI:57792"/>
        <dbReference type="ChEBI" id="CHEBI:59776"/>
        <dbReference type="EC" id="2.2.1.7"/>
    </reaction>
</comment>
<comment type="cofactor">
    <cofactor evidence="1">
        <name>Mg(2+)</name>
        <dbReference type="ChEBI" id="CHEBI:18420"/>
    </cofactor>
    <text evidence="1">Binds 1 Mg(2+) ion per subunit.</text>
</comment>
<comment type="cofactor">
    <cofactor evidence="1">
        <name>thiamine diphosphate</name>
        <dbReference type="ChEBI" id="CHEBI:58937"/>
    </cofactor>
    <text evidence="1">Binds 1 thiamine pyrophosphate per subunit.</text>
</comment>
<comment type="pathway">
    <text evidence="1">Metabolic intermediate biosynthesis; 1-deoxy-D-xylulose 5-phosphate biosynthesis; 1-deoxy-D-xylulose 5-phosphate from D-glyceraldehyde 3-phosphate and pyruvate: step 1/1.</text>
</comment>
<comment type="subunit">
    <text evidence="1">Homodimer.</text>
</comment>
<comment type="similarity">
    <text evidence="1">Belongs to the transketolase family. DXPS subfamily.</text>
</comment>
<protein>
    <recommendedName>
        <fullName evidence="1">1-deoxy-D-xylulose-5-phosphate synthase</fullName>
        <ecNumber evidence="1">2.2.1.7</ecNumber>
    </recommendedName>
    <alternativeName>
        <fullName evidence="1">1-deoxyxylulose-5-phosphate synthase</fullName>
        <shortName evidence="1">DXP synthase</shortName>
        <shortName evidence="1">DXPS</shortName>
    </alternativeName>
</protein>
<reference key="1">
    <citation type="submission" date="2006-03" db="EMBL/GenBank/DDBJ databases">
        <title>Complete sequence of Rhodopseudomonas palustris BisB18.</title>
        <authorList>
            <consortium name="US DOE Joint Genome Institute"/>
            <person name="Copeland A."/>
            <person name="Lucas S."/>
            <person name="Lapidus A."/>
            <person name="Barry K."/>
            <person name="Detter J.C."/>
            <person name="Glavina del Rio T."/>
            <person name="Hammon N."/>
            <person name="Israni S."/>
            <person name="Dalin E."/>
            <person name="Tice H."/>
            <person name="Pitluck S."/>
            <person name="Chain P."/>
            <person name="Malfatti S."/>
            <person name="Shin M."/>
            <person name="Vergez L."/>
            <person name="Schmutz J."/>
            <person name="Larimer F."/>
            <person name="Land M."/>
            <person name="Hauser L."/>
            <person name="Pelletier D.A."/>
            <person name="Kyrpides N."/>
            <person name="Anderson I."/>
            <person name="Oda Y."/>
            <person name="Harwood C.S."/>
            <person name="Richardson P."/>
        </authorList>
    </citation>
    <scope>NUCLEOTIDE SEQUENCE [LARGE SCALE GENOMIC DNA]</scope>
    <source>
        <strain>BisB18</strain>
    </source>
</reference>
<accession>Q21A74</accession>
<evidence type="ECO:0000255" key="1">
    <source>
        <dbReference type="HAMAP-Rule" id="MF_00315"/>
    </source>
</evidence>
<name>DXS_RHOPB</name>
<keyword id="KW-0414">Isoprene biosynthesis</keyword>
<keyword id="KW-0460">Magnesium</keyword>
<keyword id="KW-0479">Metal-binding</keyword>
<keyword id="KW-0784">Thiamine biosynthesis</keyword>
<keyword id="KW-0786">Thiamine pyrophosphate</keyword>
<keyword id="KW-0808">Transferase</keyword>